<protein>
    <recommendedName>
        <fullName>Pyrokinin-2</fullName>
        <shortName>Pea-PK-2</shortName>
    </recommendedName>
    <alternativeName>
        <fullName>FXPRL-amide</fullName>
    </alternativeName>
</protein>
<feature type="peptide" id="PRO_0000044323" description="Pyrokinin-2">
    <location>
        <begin position="1"/>
        <end position="8"/>
    </location>
</feature>
<feature type="modified residue" description="Leucine amide" evidence="2">
    <location>
        <position position="8"/>
    </location>
</feature>
<reference key="1">
    <citation type="journal article" date="1997" name="Peptides">
        <title>Isolation and structural elucidation of two pyrokinins from the retrocerebral complex of the American cockroach.</title>
        <authorList>
            <person name="Predel R."/>
            <person name="Kellner R."/>
            <person name="Kaufmann R."/>
            <person name="Penzlin H."/>
            <person name="Gaede G."/>
        </authorList>
    </citation>
    <scope>PROTEIN SEQUENCE</scope>
    <scope>AMIDATION AT LEU-8</scope>
    <scope>FUNCTION</scope>
    <scope>MASS SPECTROMETRY</scope>
    <source>
        <tissue>Corpora cardiaca</tissue>
    </source>
</reference>
<reference key="2">
    <citation type="journal article" date="2000" name="J. Comp. Neurol.">
        <title>Tagma-specific distribution of FXPRLamides in the nervous system of the American cockroach.</title>
        <authorList>
            <person name="Predel R."/>
            <person name="Eckert M."/>
        </authorList>
    </citation>
    <scope>TISSUE SPECIFICITY</scope>
</reference>
<evidence type="ECO:0000269" key="1">
    <source>
    </source>
</evidence>
<evidence type="ECO:0000269" key="2">
    <source>
    </source>
</evidence>
<evidence type="ECO:0000305" key="3"/>
<comment type="function">
    <text evidence="2">Mediates visceral muscle contractile activity (myotropic activity).</text>
</comment>
<comment type="subcellular location">
    <subcellularLocation>
        <location>Secreted</location>
    </subcellularLocation>
</comment>
<comment type="tissue specificity">
    <text evidence="1">Corpora cardiaca.</text>
</comment>
<comment type="mass spectrometry"/>
<comment type="similarity">
    <text evidence="3">Belongs to the pyrokinin family.</text>
</comment>
<accession>P82692</accession>
<proteinExistence type="evidence at protein level"/>
<sequence>SPPFAPRL</sequence>
<dbReference type="GO" id="GO:0005576">
    <property type="term" value="C:extracellular region"/>
    <property type="evidence" value="ECO:0007669"/>
    <property type="project" value="UniProtKB-SubCell"/>
</dbReference>
<dbReference type="GO" id="GO:0007218">
    <property type="term" value="P:neuropeptide signaling pathway"/>
    <property type="evidence" value="ECO:0007669"/>
    <property type="project" value="UniProtKB-KW"/>
</dbReference>
<organism>
    <name type="scientific">Periplaneta americana</name>
    <name type="common">American cockroach</name>
    <name type="synonym">Blatta americana</name>
    <dbReference type="NCBI Taxonomy" id="6978"/>
    <lineage>
        <taxon>Eukaryota</taxon>
        <taxon>Metazoa</taxon>
        <taxon>Ecdysozoa</taxon>
        <taxon>Arthropoda</taxon>
        <taxon>Hexapoda</taxon>
        <taxon>Insecta</taxon>
        <taxon>Pterygota</taxon>
        <taxon>Neoptera</taxon>
        <taxon>Polyneoptera</taxon>
        <taxon>Dictyoptera</taxon>
        <taxon>Blattodea</taxon>
        <taxon>Blattoidea</taxon>
        <taxon>Blattidae</taxon>
        <taxon>Blattinae</taxon>
        <taxon>Periplaneta</taxon>
    </lineage>
</organism>
<name>PPK2_PERAM</name>
<keyword id="KW-0027">Amidation</keyword>
<keyword id="KW-0903">Direct protein sequencing</keyword>
<keyword id="KW-0527">Neuropeptide</keyword>
<keyword id="KW-0964">Secreted</keyword>